<name>FUT2_HYLLA</name>
<comment type="function">
    <text evidence="5">Catalyzes the transfer of L-fucose, from a guanosine diphosphate-beta-L-fucose, to the terminal galactose on both O- and N-linked glycans chains of cell surface glycoproteins and glycolipids and the resulting epitope regulates several processes such as cell-cell interaction including host-microbe interaction, cell surface expression and cell proliferation. Preferentially fucosylates gangliosides GA1 and GM1 in the antrum, cecum and colon and in the female reproductive organs. Fucosylated host glycoproteins or glycolipids mediate interaction with intestinal microbiota influencing its composition. Creates a soluble precursor oligosaccharide FuC-alpha ((1,2)Galbeta-) called the H antigen which is an essential substrate for the final step in the soluble ABO blood group antigen synthesis pathway.</text>
</comment>
<comment type="catalytic activity">
    <reaction evidence="5">
        <text>a beta-D-galactosyl-(1-&gt;3)-N-acetyl-beta-D-glucosaminyl derivative + GDP-beta-L-fucose = an alpha-L-Fuc-(1-&gt;2)-beta-D-Gal-(1-&gt;3)-beta-D-GlcNAc derivative + GDP + H(+)</text>
        <dbReference type="Rhea" id="RHEA:50664"/>
        <dbReference type="ChEBI" id="CHEBI:15378"/>
        <dbReference type="ChEBI" id="CHEBI:57273"/>
        <dbReference type="ChEBI" id="CHEBI:58189"/>
        <dbReference type="ChEBI" id="CHEBI:133506"/>
        <dbReference type="ChEBI" id="CHEBI:133509"/>
        <dbReference type="EC" id="2.4.1.69"/>
    </reaction>
    <physiologicalReaction direction="left-to-right" evidence="5">
        <dbReference type="Rhea" id="RHEA:50665"/>
    </physiologicalReaction>
</comment>
<comment type="catalytic activity">
    <reaction evidence="5">
        <text>a beta-D-galactosyl-(1-&gt;4)-N-acetyl-beta-D-glucosaminyl derivative + GDP-beta-L-fucose = an alpha-L-Fuc-(1-&gt;2)-beta-D-Gal-(1-&gt;4)-beta-D-GlcNAc derivative + GDP + H(+)</text>
        <dbReference type="Rhea" id="RHEA:50668"/>
        <dbReference type="ChEBI" id="CHEBI:15378"/>
        <dbReference type="ChEBI" id="CHEBI:57273"/>
        <dbReference type="ChEBI" id="CHEBI:58189"/>
        <dbReference type="ChEBI" id="CHEBI:133507"/>
        <dbReference type="ChEBI" id="CHEBI:133510"/>
        <dbReference type="EC" id="2.4.1.344"/>
    </reaction>
    <physiologicalReaction direction="left-to-right" evidence="5">
        <dbReference type="Rhea" id="RHEA:50669"/>
    </physiologicalReaction>
</comment>
<comment type="catalytic activity">
    <reaction evidence="5">
        <text>a neolactoside nLc4Cer + GDP-beta-L-fucose = a neolactoside IV(2)-alpha-Fuc-nLc4Cer + GDP + H(+)</text>
        <dbReference type="Rhea" id="RHEA:48800"/>
        <dbReference type="ChEBI" id="CHEBI:15378"/>
        <dbReference type="ChEBI" id="CHEBI:57273"/>
        <dbReference type="ChEBI" id="CHEBI:58189"/>
        <dbReference type="ChEBI" id="CHEBI:90376"/>
        <dbReference type="ChEBI" id="CHEBI:90803"/>
    </reaction>
    <physiologicalReaction direction="left-to-right" evidence="5">
        <dbReference type="Rhea" id="RHEA:48801"/>
    </physiologicalReaction>
</comment>
<comment type="catalytic activity">
    <reaction evidence="5">
        <text>a neolactoside nLc4Cer(d18:1(4E)) + GDP-beta-L-fucose = a neolactoside IV(2)-alpha-Fuc-nLc4Cer(d18:1(4E)) + GDP + H(+)</text>
        <dbReference type="Rhea" id="RHEA:48304"/>
        <dbReference type="ChEBI" id="CHEBI:15378"/>
        <dbReference type="ChEBI" id="CHEBI:17006"/>
        <dbReference type="ChEBI" id="CHEBI:28691"/>
        <dbReference type="ChEBI" id="CHEBI:57273"/>
        <dbReference type="ChEBI" id="CHEBI:58189"/>
    </reaction>
    <physiologicalReaction direction="left-to-right" evidence="5">
        <dbReference type="Rhea" id="RHEA:48305"/>
    </physiologicalReaction>
</comment>
<comment type="catalytic activity">
    <reaction evidence="5">
        <text>a ganglioside GM1 + GDP-beta-L-fucose = a ganglioside Fuc-GM1 + GDP + H(+)</text>
        <dbReference type="Rhea" id="RHEA:48292"/>
        <dbReference type="ChEBI" id="CHEBI:15378"/>
        <dbReference type="ChEBI" id="CHEBI:57273"/>
        <dbReference type="ChEBI" id="CHEBI:58189"/>
        <dbReference type="ChEBI" id="CHEBI:82639"/>
        <dbReference type="ChEBI" id="CHEBI:90189"/>
    </reaction>
    <physiologicalReaction direction="left-to-right" evidence="5">
        <dbReference type="Rhea" id="RHEA:48293"/>
    </physiologicalReaction>
</comment>
<comment type="catalytic activity">
    <reaction evidence="5">
        <text>a ganglioside GA1 + GDP-beta-L-fucose = a ganglioside Fuc-GA1 + GDP + H(+)</text>
        <dbReference type="Rhea" id="RHEA:48320"/>
        <dbReference type="ChEBI" id="CHEBI:15378"/>
        <dbReference type="ChEBI" id="CHEBI:57273"/>
        <dbReference type="ChEBI" id="CHEBI:58189"/>
        <dbReference type="ChEBI" id="CHEBI:88069"/>
        <dbReference type="ChEBI" id="CHEBI:90262"/>
    </reaction>
    <physiologicalReaction direction="left-to-right" evidence="5">
        <dbReference type="Rhea" id="RHEA:48321"/>
    </physiologicalReaction>
</comment>
<comment type="catalytic activity">
    <reaction evidence="5">
        <text>Lc4Cer + GDP-beta-L-fucose = alpha-L-fucosyl-(1-&gt;2)-beta-D-galactosyl-(1-&gt;3)-N-acetyl-beta-D-glucosaminyl-(1-&gt;3)-beta-D-galactosyl-(1-&gt;4)-beta-D-glucosyl-(1&lt;-&gt;1')-ceramide + GDP + H(+)</text>
        <dbReference type="Rhea" id="RHEA:48792"/>
        <dbReference type="ChEBI" id="CHEBI:15378"/>
        <dbReference type="ChEBI" id="CHEBI:57273"/>
        <dbReference type="ChEBI" id="CHEBI:58189"/>
        <dbReference type="ChEBI" id="CHEBI:90800"/>
        <dbReference type="ChEBI" id="CHEBI:90802"/>
    </reaction>
    <physiologicalReaction direction="left-to-right" evidence="5">
        <dbReference type="Rhea" id="RHEA:48793"/>
    </physiologicalReaction>
</comment>
<comment type="catalytic activity">
    <reaction evidence="5">
        <text>a beta-D-Gal-(1-&gt;3)-beta-D-GlcNAc-(1-&gt;3)-beta-D-Gal-(1-&gt;4)-beta-D-Glc-(1&lt;-&gt;1')-Cer(d18:1(4E)) + GDP-beta-L-fucose = alpha-L-fucosyl-(1-&gt;2)- beta-D-galactosyl-(1-&gt;3)-N-acetyl-beta-D-glucosaminyl-(1-&gt;3)-beta-D-galactosyl-(1-&gt;4)-beta-D-glucosyl-(1&lt;-&gt;1')-N-acylsphing-4-enine + GDP + H(+)</text>
        <dbReference type="Rhea" id="RHEA:32175"/>
        <dbReference type="ChEBI" id="CHEBI:15378"/>
        <dbReference type="ChEBI" id="CHEBI:17292"/>
        <dbReference type="ChEBI" id="CHEBI:28743"/>
        <dbReference type="ChEBI" id="CHEBI:57273"/>
        <dbReference type="ChEBI" id="CHEBI:58189"/>
        <dbReference type="EC" id="2.4.1.69"/>
    </reaction>
    <physiologicalReaction direction="left-to-right" evidence="5">
        <dbReference type="Rhea" id="RHEA:32176"/>
    </physiologicalReaction>
</comment>
<comment type="catalytic activity">
    <reaction evidence="5">
        <text>a ganglioside GD1b + GDP-beta-L-fucose = a ganglioside Fuc-GD1b + GDP + H(+)</text>
        <dbReference type="Rhea" id="RHEA:48324"/>
        <dbReference type="ChEBI" id="CHEBI:15378"/>
        <dbReference type="ChEBI" id="CHEBI:57273"/>
        <dbReference type="ChEBI" id="CHEBI:58189"/>
        <dbReference type="ChEBI" id="CHEBI:82939"/>
        <dbReference type="ChEBI" id="CHEBI:90265"/>
    </reaction>
    <physiologicalReaction direction="left-to-right" evidence="5">
        <dbReference type="Rhea" id="RHEA:48325"/>
    </physiologicalReaction>
</comment>
<comment type="catalytic activity">
    <reaction evidence="3">
        <text>a ganglioside GM1 (d18:1(4E)) + GDP-beta-L-fucose = a ganglioside Fuc-GM1 (d18:1(4E)) + GDP + H(+)</text>
        <dbReference type="Rhea" id="RHEA:42040"/>
        <dbReference type="ChEBI" id="CHEBI:15378"/>
        <dbReference type="ChEBI" id="CHEBI:57273"/>
        <dbReference type="ChEBI" id="CHEBI:58189"/>
        <dbReference type="ChEBI" id="CHEBI:77709"/>
        <dbReference type="ChEBI" id="CHEBI:78607"/>
    </reaction>
    <physiologicalReaction direction="left-to-right" evidence="3">
        <dbReference type="Rhea" id="RHEA:42041"/>
    </physiologicalReaction>
</comment>
<comment type="catalytic activity">
    <reaction evidence="3">
        <text>a globoside GalGb4Cer (d18:1(4E)) + GDP-beta-L-fucose = a globoside Globo-H (d18:1(4E)) + GDP + H(+)</text>
        <dbReference type="Rhea" id="RHEA:42044"/>
        <dbReference type="ChEBI" id="CHEBI:15378"/>
        <dbReference type="ChEBI" id="CHEBI:57273"/>
        <dbReference type="ChEBI" id="CHEBI:58189"/>
        <dbReference type="ChEBI" id="CHEBI:62571"/>
        <dbReference type="ChEBI" id="CHEBI:62649"/>
    </reaction>
    <physiologicalReaction direction="left-to-right" evidence="3">
        <dbReference type="Rhea" id="RHEA:42045"/>
    </physiologicalReaction>
</comment>
<comment type="catalytic activity">
    <reaction evidence="5">
        <text>a lactoside III(4)-a-Fuc-Lc4Cer + GDP-beta-L-fucose = a lactoside IV(2),III(4)-a-[Fuc]2-Lc4Cer + GDP + H(+)</text>
        <dbReference type="Rhea" id="RHEA:62616"/>
        <dbReference type="ChEBI" id="CHEBI:15378"/>
        <dbReference type="ChEBI" id="CHEBI:57273"/>
        <dbReference type="ChEBI" id="CHEBI:58189"/>
        <dbReference type="ChEBI" id="CHEBI:90811"/>
        <dbReference type="ChEBI" id="CHEBI:142612"/>
    </reaction>
    <physiologicalReaction direction="left-to-right" evidence="5">
        <dbReference type="Rhea" id="RHEA:62617"/>
    </physiologicalReaction>
</comment>
<comment type="catalytic activity">
    <reaction evidence="4">
        <text>beta-D-galactosyl-(1-&gt;3)-N-acetyl-D-galactosamine + GDP-beta-L-fucose = alpha-L-fucosyl-(1-&gt;2)-beta-D-galactosyl-(1-&gt;3)-N-acetyl-D-galactosamine + GDP + H(+)</text>
        <dbReference type="Rhea" id="RHEA:62964"/>
        <dbReference type="ChEBI" id="CHEBI:15378"/>
        <dbReference type="ChEBI" id="CHEBI:57273"/>
        <dbReference type="ChEBI" id="CHEBI:58189"/>
        <dbReference type="ChEBI" id="CHEBI:84728"/>
        <dbReference type="ChEBI" id="CHEBI:546807"/>
    </reaction>
    <physiologicalReaction direction="left-to-right" evidence="4">
        <dbReference type="Rhea" id="RHEA:62965"/>
    </physiologicalReaction>
</comment>
<comment type="pathway">
    <text evidence="5">Protein modification; protein glycosylation.</text>
</comment>
<comment type="subcellular location">
    <subcellularLocation>
        <location evidence="1">Golgi apparatus</location>
        <location evidence="1">Golgi stack membrane</location>
        <topology evidence="1">Single-pass type II membrane protein</topology>
    </subcellularLocation>
    <text evidence="1">Membrane-bound form in trans cisternae of Golgi.</text>
</comment>
<comment type="similarity">
    <text evidence="7">Belongs to the glycosyltransferase 11 family.</text>
</comment>
<sequence length="343" mass="39059">MLVVQMPFSFPMAHFILFVFTVSTIFHVQQRLAKIQAMWELPVQIPVLASTSKALGHSQLRGMWTINAIGRLGNQMGEYATLYALAKMNGRPAFIPAQMHNTLAPIFRITLPVLNSAMASRIPWHNYHLNDWMEEEYRHIPGEYVRLTGYPCSWTFYHHLRHEILQEFTLHDHVREEAQKFLRGLQVNGSRPGTFVGVHVRRGDYVHVMPKVWKGVVADRRYLQQALDWFRARYSSPIFVVTSNGMAWCRENIDTSHGDVVFAGDGIEGSPAKDFALLTQCNHTIMTIGTFGIWAAYLTGGDTIYLANYTLPDSPFLKIFKPEAAFLPEWTGIAADLSPLLKH</sequence>
<dbReference type="EC" id="2.4.1.69" evidence="5"/>
<dbReference type="EC" id="2.4.1.344" evidence="5"/>
<dbReference type="EMBL" id="AF136648">
    <property type="protein sequence ID" value="AAF25585.1"/>
    <property type="molecule type" value="Genomic_DNA"/>
</dbReference>
<dbReference type="CAZy" id="GT11">
    <property type="family name" value="Glycosyltransferase Family 11"/>
</dbReference>
<dbReference type="GlyCosmos" id="Q9TTC7">
    <property type="glycosylation" value="3 sites, No reported glycans"/>
</dbReference>
<dbReference type="BRENDA" id="2.4.1.69">
    <property type="organism ID" value="2731"/>
</dbReference>
<dbReference type="UniPathway" id="UPA00378"/>
<dbReference type="GO" id="GO:0032580">
    <property type="term" value="C:Golgi cisterna membrane"/>
    <property type="evidence" value="ECO:0007669"/>
    <property type="project" value="UniProtKB-SubCell"/>
</dbReference>
<dbReference type="GO" id="GO:0031127">
    <property type="term" value="F:alpha-(1,2)-fucosyltransferase activity"/>
    <property type="evidence" value="ECO:0000250"/>
    <property type="project" value="UniProtKB"/>
</dbReference>
<dbReference type="GO" id="GO:0008107">
    <property type="term" value="F:galactoside 2-alpha-L-fucosyltransferase activity"/>
    <property type="evidence" value="ECO:0007669"/>
    <property type="project" value="UniProtKB-EC"/>
</dbReference>
<dbReference type="GO" id="GO:0005975">
    <property type="term" value="P:carbohydrate metabolic process"/>
    <property type="evidence" value="ECO:0007669"/>
    <property type="project" value="InterPro"/>
</dbReference>
<dbReference type="GO" id="GO:0036065">
    <property type="term" value="P:fucosylation"/>
    <property type="evidence" value="ECO:0000250"/>
    <property type="project" value="UniProtKB"/>
</dbReference>
<dbReference type="GO" id="GO:0006664">
    <property type="term" value="P:glycolipid metabolic process"/>
    <property type="evidence" value="ECO:0000250"/>
    <property type="project" value="UniProtKB"/>
</dbReference>
<dbReference type="GO" id="GO:0006486">
    <property type="term" value="P:protein glycosylation"/>
    <property type="evidence" value="ECO:0007669"/>
    <property type="project" value="UniProtKB-UniPathway"/>
</dbReference>
<dbReference type="GO" id="GO:0030155">
    <property type="term" value="P:regulation of cell adhesion"/>
    <property type="evidence" value="ECO:0000250"/>
    <property type="project" value="UniProtKB"/>
</dbReference>
<dbReference type="GO" id="GO:0001936">
    <property type="term" value="P:regulation of endothelial cell proliferation"/>
    <property type="evidence" value="ECO:0000250"/>
    <property type="project" value="UniProtKB"/>
</dbReference>
<dbReference type="CDD" id="cd11301">
    <property type="entry name" value="Fut1_Fut2_like"/>
    <property type="match status" value="1"/>
</dbReference>
<dbReference type="InterPro" id="IPR002516">
    <property type="entry name" value="Glyco_trans_11"/>
</dbReference>
<dbReference type="PANTHER" id="PTHR11927">
    <property type="entry name" value="GALACTOSIDE 2-L-FUCOSYLTRANSFERASE"/>
    <property type="match status" value="1"/>
</dbReference>
<dbReference type="PANTHER" id="PTHR11927:SF2">
    <property type="entry name" value="GALACTOSIDE ALPHA-(1,2)-FUCOSYLTRANSFERASE 2"/>
    <property type="match status" value="1"/>
</dbReference>
<dbReference type="Pfam" id="PF01531">
    <property type="entry name" value="Glyco_transf_11"/>
    <property type="match status" value="1"/>
</dbReference>
<evidence type="ECO:0000250" key="1"/>
<evidence type="ECO:0000250" key="2">
    <source>
        <dbReference type="UniProtKB" id="Q10981"/>
    </source>
</evidence>
<evidence type="ECO:0000250" key="3">
    <source>
        <dbReference type="UniProtKB" id="Q10984"/>
    </source>
</evidence>
<evidence type="ECO:0000250" key="4">
    <source>
        <dbReference type="UniProtKB" id="Q28113"/>
    </source>
</evidence>
<evidence type="ECO:0000250" key="5">
    <source>
        <dbReference type="UniProtKB" id="Q9JL27"/>
    </source>
</evidence>
<evidence type="ECO:0000255" key="6"/>
<evidence type="ECO:0000305" key="7"/>
<protein>
    <recommendedName>
        <fullName evidence="2">Galactoside alpha-(1,2)-fucosyltransferase 2</fullName>
    </recommendedName>
    <alternativeName>
        <fullName>Alpha(1,2)FT 2</fullName>
    </alternativeName>
    <alternativeName>
        <fullName>Fucosyltransferase 2</fullName>
    </alternativeName>
    <alternativeName>
        <fullName>GDP-L-fucose:beta-D-galactoside 2-alpha-L-fucosyltransferase 2</fullName>
    </alternativeName>
    <alternativeName>
        <fullName evidence="2">Type 1 galactoside alpha-(1,2)-fucosyltransferase FUT2</fullName>
        <ecNumber evidence="5">2.4.1.69</ecNumber>
    </alternativeName>
    <alternativeName>
        <fullName evidence="2">Type 2 galactoside alpha-(1,2)-fucosyltransferase FUT2</fullName>
        <ecNumber evidence="5">2.4.1.344</ecNumber>
    </alternativeName>
</protein>
<gene>
    <name evidence="2" type="primary">FUT2</name>
</gene>
<keyword id="KW-0325">Glycoprotein</keyword>
<keyword id="KW-0328">Glycosyltransferase</keyword>
<keyword id="KW-0333">Golgi apparatus</keyword>
<keyword id="KW-0443">Lipid metabolism</keyword>
<keyword id="KW-0472">Membrane</keyword>
<keyword id="KW-0735">Signal-anchor</keyword>
<keyword id="KW-0808">Transferase</keyword>
<keyword id="KW-0812">Transmembrane</keyword>
<keyword id="KW-1133">Transmembrane helix</keyword>
<organism>
    <name type="scientific">Hylobates lar</name>
    <name type="common">Lar gibbon</name>
    <name type="synonym">White-handed gibbon</name>
    <dbReference type="NCBI Taxonomy" id="9580"/>
    <lineage>
        <taxon>Eukaryota</taxon>
        <taxon>Metazoa</taxon>
        <taxon>Chordata</taxon>
        <taxon>Craniata</taxon>
        <taxon>Vertebrata</taxon>
        <taxon>Euteleostomi</taxon>
        <taxon>Mammalia</taxon>
        <taxon>Eutheria</taxon>
        <taxon>Euarchontoglires</taxon>
        <taxon>Primates</taxon>
        <taxon>Haplorrhini</taxon>
        <taxon>Catarrhini</taxon>
        <taxon>Hylobatidae</taxon>
        <taxon>Hylobates</taxon>
    </lineage>
</organism>
<reference key="1">
    <citation type="journal article" date="2000" name="Mol. Biol. Evol.">
        <title>Evolution of alpha 2-fucosyltransferase genes in primates: relation between an intronic Alu-Y element and red cell expression of ABH antigens.</title>
        <authorList>
            <person name="Apoil P.-A."/>
            <person name="Roubinet F."/>
            <person name="Despiau S."/>
            <person name="Mollicone R."/>
            <person name="Oriol R."/>
            <person name="Blancher A."/>
        </authorList>
    </citation>
    <scope>NUCLEOTIDE SEQUENCE [GENOMIC DNA]</scope>
    <source>
        <strain>Isolate Tiga</strain>
    </source>
</reference>
<feature type="chain" id="PRO_0000149108" description="Galactoside alpha-(1,2)-fucosyltransferase 2">
    <location>
        <begin position="1"/>
        <end position="343"/>
    </location>
</feature>
<feature type="topological domain" description="Cytoplasmic" evidence="6">
    <location>
        <begin position="1"/>
        <end position="14"/>
    </location>
</feature>
<feature type="transmembrane region" description="Helical; Signal-anchor for type II membrane protein" evidence="6">
    <location>
        <begin position="15"/>
        <end position="28"/>
    </location>
</feature>
<feature type="topological domain" description="Lumenal" evidence="6">
    <location>
        <begin position="29"/>
        <end position="343"/>
    </location>
</feature>
<feature type="glycosylation site" description="N-linked (GlcNAc...) asparagine" evidence="6">
    <location>
        <position position="188"/>
    </location>
</feature>
<feature type="glycosylation site" description="N-linked (GlcNAc...) asparagine" evidence="6">
    <location>
        <position position="282"/>
    </location>
</feature>
<feature type="glycosylation site" description="N-linked (GlcNAc...) asparagine" evidence="6">
    <location>
        <position position="308"/>
    </location>
</feature>
<accession>Q9TTC7</accession>
<proteinExistence type="inferred from homology"/>